<accession>Q82SM6</accession>
<comment type="function">
    <text evidence="1">Catalyzes the NADPH-dependent reduction of 7-cyano-7-deazaguanine (preQ0) to 7-aminomethyl-7-deazaguanine (preQ1).</text>
</comment>
<comment type="catalytic activity">
    <reaction evidence="1">
        <text>7-aminomethyl-7-carbaguanine + 2 NADP(+) = 7-cyano-7-deazaguanine + 2 NADPH + 3 H(+)</text>
        <dbReference type="Rhea" id="RHEA:13409"/>
        <dbReference type="ChEBI" id="CHEBI:15378"/>
        <dbReference type="ChEBI" id="CHEBI:45075"/>
        <dbReference type="ChEBI" id="CHEBI:57783"/>
        <dbReference type="ChEBI" id="CHEBI:58349"/>
        <dbReference type="ChEBI" id="CHEBI:58703"/>
        <dbReference type="EC" id="1.7.1.13"/>
    </reaction>
</comment>
<comment type="pathway">
    <text evidence="1">tRNA modification; tRNA-queuosine biosynthesis.</text>
</comment>
<comment type="subcellular location">
    <subcellularLocation>
        <location evidence="1">Cytoplasm</location>
    </subcellularLocation>
</comment>
<comment type="similarity">
    <text evidence="1">Belongs to the GTP cyclohydrolase I family. QueF type 1 subfamily.</text>
</comment>
<name>QUEF_NITEU</name>
<organism>
    <name type="scientific">Nitrosomonas europaea (strain ATCC 19718 / CIP 103999 / KCTC 2705 / NBRC 14298)</name>
    <dbReference type="NCBI Taxonomy" id="228410"/>
    <lineage>
        <taxon>Bacteria</taxon>
        <taxon>Pseudomonadati</taxon>
        <taxon>Pseudomonadota</taxon>
        <taxon>Betaproteobacteria</taxon>
        <taxon>Nitrosomonadales</taxon>
        <taxon>Nitrosomonadaceae</taxon>
        <taxon>Nitrosomonas</taxon>
    </lineage>
</organism>
<gene>
    <name evidence="1" type="primary">queF</name>
    <name type="ordered locus">NE2285</name>
</gene>
<keyword id="KW-0963">Cytoplasm</keyword>
<keyword id="KW-0521">NADP</keyword>
<keyword id="KW-0560">Oxidoreductase</keyword>
<keyword id="KW-0671">Queuosine biosynthesis</keyword>
<keyword id="KW-1185">Reference proteome</keyword>
<protein>
    <recommendedName>
        <fullName evidence="1">NADPH-dependent 7-cyano-7-deazaguanine reductase</fullName>
        <ecNumber evidence="1">1.7.1.13</ecNumber>
    </recommendedName>
    <alternativeName>
        <fullName evidence="1">7-cyano-7-carbaguanine reductase</fullName>
    </alternativeName>
    <alternativeName>
        <fullName evidence="1">NADPH-dependent nitrile oxidoreductase</fullName>
    </alternativeName>
    <alternativeName>
        <fullName evidence="1">PreQ(0) reductase</fullName>
    </alternativeName>
</protein>
<proteinExistence type="inferred from homology"/>
<evidence type="ECO:0000255" key="1">
    <source>
        <dbReference type="HAMAP-Rule" id="MF_00818"/>
    </source>
</evidence>
<dbReference type="EC" id="1.7.1.13" evidence="1"/>
<dbReference type="EMBL" id="AL954747">
    <property type="protein sequence ID" value="CAD86197.1"/>
    <property type="molecule type" value="Genomic_DNA"/>
</dbReference>
<dbReference type="RefSeq" id="WP_011112772.1">
    <property type="nucleotide sequence ID" value="NC_004757.1"/>
</dbReference>
<dbReference type="SMR" id="Q82SM6"/>
<dbReference type="STRING" id="228410.NE2285"/>
<dbReference type="GeneID" id="87105418"/>
<dbReference type="KEGG" id="neu:NE2285"/>
<dbReference type="eggNOG" id="COG0780">
    <property type="taxonomic scope" value="Bacteria"/>
</dbReference>
<dbReference type="HOGENOM" id="CLU_102489_1_0_4"/>
<dbReference type="OrthoDB" id="9789995at2"/>
<dbReference type="PhylomeDB" id="Q82SM6"/>
<dbReference type="UniPathway" id="UPA00392"/>
<dbReference type="Proteomes" id="UP000001416">
    <property type="component" value="Chromosome"/>
</dbReference>
<dbReference type="GO" id="GO:0005737">
    <property type="term" value="C:cytoplasm"/>
    <property type="evidence" value="ECO:0007669"/>
    <property type="project" value="UniProtKB-SubCell"/>
</dbReference>
<dbReference type="GO" id="GO:0033739">
    <property type="term" value="F:preQ1 synthase activity"/>
    <property type="evidence" value="ECO:0007669"/>
    <property type="project" value="UniProtKB-UniRule"/>
</dbReference>
<dbReference type="GO" id="GO:0008616">
    <property type="term" value="P:queuosine biosynthetic process"/>
    <property type="evidence" value="ECO:0007669"/>
    <property type="project" value="UniProtKB-UniRule"/>
</dbReference>
<dbReference type="GO" id="GO:0006400">
    <property type="term" value="P:tRNA modification"/>
    <property type="evidence" value="ECO:0007669"/>
    <property type="project" value="UniProtKB-UniRule"/>
</dbReference>
<dbReference type="Gene3D" id="3.30.1130.10">
    <property type="match status" value="1"/>
</dbReference>
<dbReference type="HAMAP" id="MF_00818">
    <property type="entry name" value="QueF_type1"/>
    <property type="match status" value="1"/>
</dbReference>
<dbReference type="InterPro" id="IPR043133">
    <property type="entry name" value="GTP-CH-I_C/QueF"/>
</dbReference>
<dbReference type="InterPro" id="IPR050084">
    <property type="entry name" value="NADPH_dep_7-cyano-7-deazaG_red"/>
</dbReference>
<dbReference type="InterPro" id="IPR029500">
    <property type="entry name" value="QueF"/>
</dbReference>
<dbReference type="InterPro" id="IPR016856">
    <property type="entry name" value="QueF_type1"/>
</dbReference>
<dbReference type="NCBIfam" id="TIGR03139">
    <property type="entry name" value="QueF-II"/>
    <property type="match status" value="1"/>
</dbReference>
<dbReference type="PANTHER" id="PTHR34354">
    <property type="entry name" value="NADPH-DEPENDENT 7-CYANO-7-DEAZAGUANINE REDUCTASE"/>
    <property type="match status" value="1"/>
</dbReference>
<dbReference type="PANTHER" id="PTHR34354:SF1">
    <property type="entry name" value="NADPH-DEPENDENT 7-CYANO-7-DEAZAGUANINE REDUCTASE"/>
    <property type="match status" value="1"/>
</dbReference>
<dbReference type="Pfam" id="PF14489">
    <property type="entry name" value="QueF"/>
    <property type="match status" value="1"/>
</dbReference>
<dbReference type="PIRSF" id="PIRSF027377">
    <property type="entry name" value="Nitrile_oxidored_QueF"/>
    <property type="match status" value="1"/>
</dbReference>
<dbReference type="SUPFAM" id="SSF55620">
    <property type="entry name" value="Tetrahydrobiopterin biosynthesis enzymes-like"/>
    <property type="match status" value="1"/>
</dbReference>
<feature type="chain" id="PRO_0000162983" description="NADPH-dependent 7-cyano-7-deazaguanine reductase">
    <location>
        <begin position="1"/>
        <end position="139"/>
    </location>
</feature>
<feature type="active site" description="Thioimide intermediate" evidence="1">
    <location>
        <position position="34"/>
    </location>
</feature>
<feature type="active site" description="Proton donor" evidence="1">
    <location>
        <position position="41"/>
    </location>
</feature>
<feature type="binding site" evidence="1">
    <location>
        <begin position="56"/>
        <end position="58"/>
    </location>
    <ligand>
        <name>substrate</name>
    </ligand>
</feature>
<feature type="binding site" evidence="1">
    <location>
        <begin position="75"/>
        <end position="76"/>
    </location>
    <ligand>
        <name>substrate</name>
    </ligand>
</feature>
<reference key="1">
    <citation type="journal article" date="2003" name="J. Bacteriol.">
        <title>Complete genome sequence of the ammonia-oxidizing bacterium and obligate chemolithoautotroph Nitrosomonas europaea.</title>
        <authorList>
            <person name="Chain P."/>
            <person name="Lamerdin J.E."/>
            <person name="Larimer F.W."/>
            <person name="Regala W."/>
            <person name="Lao V."/>
            <person name="Land M.L."/>
            <person name="Hauser L."/>
            <person name="Hooper A.B."/>
            <person name="Klotz M.G."/>
            <person name="Norton J."/>
            <person name="Sayavedra-Soto L.A."/>
            <person name="Arciero D.M."/>
            <person name="Hommes N.G."/>
            <person name="Whittaker M.M."/>
            <person name="Arp D.J."/>
        </authorList>
    </citation>
    <scope>NUCLEOTIDE SEQUENCE [LARGE SCALE GENOMIC DNA]</scope>
    <source>
        <strain>ATCC 19718 / CIP 103999 / KCTC 2705 / NBRC 14298</strain>
    </source>
</reference>
<sequence>MTTQPSKQLETFENPVQTRDYRIHMEIPEFTCLCPKTGQPDFARLTLDYIPDKKCIELKSLKLYIWSYRDEGAFHEAVTNRILDDLVAAMKPRFIRLTSKFYVRGGIFTNVVAEHRKKGWQPQPPVLLEVFEQQFNTHG</sequence>